<dbReference type="EMBL" id="AF010496">
    <property type="protein sequence ID" value="AAC16218.1"/>
    <property type="molecule type" value="Genomic_DNA"/>
</dbReference>
<dbReference type="EMBL" id="CP001312">
    <property type="protein sequence ID" value="ADE85753.1"/>
    <property type="molecule type" value="Genomic_DNA"/>
</dbReference>
<dbReference type="PIR" id="T03565">
    <property type="entry name" value="T03565"/>
</dbReference>
<dbReference type="RefSeq" id="WP_013067732.1">
    <property type="nucleotide sequence ID" value="NC_014034.1"/>
</dbReference>
<dbReference type="SMR" id="O68128"/>
<dbReference type="STRING" id="272942.RCAP_rcc02009"/>
<dbReference type="GeneID" id="31490873"/>
<dbReference type="KEGG" id="rcp:RCAP_rcc02009"/>
<dbReference type="eggNOG" id="COG0359">
    <property type="taxonomic scope" value="Bacteria"/>
</dbReference>
<dbReference type="HOGENOM" id="CLU_078938_1_0_5"/>
<dbReference type="OrthoDB" id="9788336at2"/>
<dbReference type="Proteomes" id="UP000002361">
    <property type="component" value="Chromosome"/>
</dbReference>
<dbReference type="GO" id="GO:1990904">
    <property type="term" value="C:ribonucleoprotein complex"/>
    <property type="evidence" value="ECO:0007669"/>
    <property type="project" value="UniProtKB-KW"/>
</dbReference>
<dbReference type="GO" id="GO:0005840">
    <property type="term" value="C:ribosome"/>
    <property type="evidence" value="ECO:0007669"/>
    <property type="project" value="UniProtKB-KW"/>
</dbReference>
<dbReference type="GO" id="GO:0019843">
    <property type="term" value="F:rRNA binding"/>
    <property type="evidence" value="ECO:0007669"/>
    <property type="project" value="UniProtKB-UniRule"/>
</dbReference>
<dbReference type="GO" id="GO:0003735">
    <property type="term" value="F:structural constituent of ribosome"/>
    <property type="evidence" value="ECO:0007669"/>
    <property type="project" value="InterPro"/>
</dbReference>
<dbReference type="GO" id="GO:0006412">
    <property type="term" value="P:translation"/>
    <property type="evidence" value="ECO:0007669"/>
    <property type="project" value="UniProtKB-UniRule"/>
</dbReference>
<dbReference type="Gene3D" id="3.10.430.100">
    <property type="entry name" value="Ribosomal protein L9, C-terminal domain"/>
    <property type="match status" value="1"/>
</dbReference>
<dbReference type="Gene3D" id="3.40.5.10">
    <property type="entry name" value="Ribosomal protein L9, N-terminal domain"/>
    <property type="match status" value="1"/>
</dbReference>
<dbReference type="HAMAP" id="MF_00503">
    <property type="entry name" value="Ribosomal_bL9"/>
    <property type="match status" value="1"/>
</dbReference>
<dbReference type="InterPro" id="IPR000244">
    <property type="entry name" value="Ribosomal_bL9"/>
</dbReference>
<dbReference type="InterPro" id="IPR009027">
    <property type="entry name" value="Ribosomal_bL9/RNase_H1_N"/>
</dbReference>
<dbReference type="InterPro" id="IPR020594">
    <property type="entry name" value="Ribosomal_bL9_bac/chp"/>
</dbReference>
<dbReference type="InterPro" id="IPR020069">
    <property type="entry name" value="Ribosomal_bL9_C"/>
</dbReference>
<dbReference type="InterPro" id="IPR036791">
    <property type="entry name" value="Ribosomal_bL9_C_sf"/>
</dbReference>
<dbReference type="InterPro" id="IPR020070">
    <property type="entry name" value="Ribosomal_bL9_N"/>
</dbReference>
<dbReference type="InterPro" id="IPR036935">
    <property type="entry name" value="Ribosomal_bL9_N_sf"/>
</dbReference>
<dbReference type="NCBIfam" id="TIGR00158">
    <property type="entry name" value="L9"/>
    <property type="match status" value="1"/>
</dbReference>
<dbReference type="PANTHER" id="PTHR21368">
    <property type="entry name" value="50S RIBOSOMAL PROTEIN L9"/>
    <property type="match status" value="1"/>
</dbReference>
<dbReference type="Pfam" id="PF03948">
    <property type="entry name" value="Ribosomal_L9_C"/>
    <property type="match status" value="1"/>
</dbReference>
<dbReference type="Pfam" id="PF01281">
    <property type="entry name" value="Ribosomal_L9_N"/>
    <property type="match status" value="1"/>
</dbReference>
<dbReference type="SUPFAM" id="SSF55658">
    <property type="entry name" value="L9 N-domain-like"/>
    <property type="match status" value="1"/>
</dbReference>
<dbReference type="SUPFAM" id="SSF55653">
    <property type="entry name" value="Ribosomal protein L9 C-domain"/>
    <property type="match status" value="1"/>
</dbReference>
<dbReference type="PROSITE" id="PS00651">
    <property type="entry name" value="RIBOSOMAL_L9"/>
    <property type="match status" value="1"/>
</dbReference>
<feature type="chain" id="PRO_0000176669" description="Large ribosomal subunit protein bL9">
    <location>
        <begin position="1"/>
        <end position="190"/>
    </location>
</feature>
<feature type="sequence conflict" description="In Ref. 1; AAC16218." evidence="2" ref="1">
    <original>GAAASDDE</original>
    <variation>APRPRTTNKTLPPGSVATRPPGAVLFWPQGFCAARKMHKI</variation>
    <location>
        <begin position="183"/>
        <end position="190"/>
    </location>
</feature>
<gene>
    <name evidence="1" type="primary">rplI</name>
    <name type="ordered locus">RCAP_rcc02009</name>
</gene>
<protein>
    <recommendedName>
        <fullName evidence="1">Large ribosomal subunit protein bL9</fullName>
    </recommendedName>
    <alternativeName>
        <fullName evidence="2">50S ribosomal protein L9</fullName>
    </alternativeName>
</protein>
<comment type="function">
    <text evidence="1">Binds to the 23S rRNA.</text>
</comment>
<comment type="similarity">
    <text evidence="1">Belongs to the bacterial ribosomal protein bL9 family.</text>
</comment>
<reference key="1">
    <citation type="journal article" date="1997" name="Proc. Natl. Acad. Sci. U.S.A.">
        <title>Sequence of a 189-kb segment of the chromosome of Rhodobacter capsulatus SB1003.</title>
        <authorList>
            <person name="Vlcek C."/>
            <person name="Paces V."/>
            <person name="Maltsev N."/>
            <person name="Paces J."/>
            <person name="Haselkorn R."/>
            <person name="Fonstein M."/>
        </authorList>
    </citation>
    <scope>NUCLEOTIDE SEQUENCE [GENOMIC DNA]</scope>
    <source>
        <strain>ATCC BAA-309 / NBRC 16581 / SB1003</strain>
    </source>
</reference>
<reference key="2">
    <citation type="journal article" date="2010" name="J. Bacteriol.">
        <title>Complete genome sequence of the photosynthetic purple nonsulfur bacterium Rhodobacter capsulatus SB 1003.</title>
        <authorList>
            <person name="Strnad H."/>
            <person name="Lapidus A."/>
            <person name="Paces J."/>
            <person name="Ulbrich P."/>
            <person name="Vlcek C."/>
            <person name="Paces V."/>
            <person name="Haselkorn R."/>
        </authorList>
    </citation>
    <scope>NUCLEOTIDE SEQUENCE [LARGE SCALE GENOMIC DNA]</scope>
    <source>
        <strain>ATCC BAA-309 / NBRC 16581 / SB1003</strain>
    </source>
</reference>
<evidence type="ECO:0000255" key="1">
    <source>
        <dbReference type="HAMAP-Rule" id="MF_00503"/>
    </source>
</evidence>
<evidence type="ECO:0000305" key="2"/>
<keyword id="KW-1185">Reference proteome</keyword>
<keyword id="KW-0687">Ribonucleoprotein</keyword>
<keyword id="KW-0689">Ribosomal protein</keyword>
<keyword id="KW-0694">RNA-binding</keyword>
<keyword id="KW-0699">rRNA-binding</keyword>
<name>RL9_RHOCB</name>
<organism>
    <name type="scientific">Rhodobacter capsulatus (strain ATCC BAA-309 / NBRC 16581 / SB1003)</name>
    <dbReference type="NCBI Taxonomy" id="272942"/>
    <lineage>
        <taxon>Bacteria</taxon>
        <taxon>Pseudomonadati</taxon>
        <taxon>Pseudomonadota</taxon>
        <taxon>Alphaproteobacteria</taxon>
        <taxon>Rhodobacterales</taxon>
        <taxon>Rhodobacter group</taxon>
        <taxon>Rhodobacter</taxon>
    </lineage>
</organism>
<accession>O68128</accession>
<accession>D5AUW4</accession>
<proteinExistence type="inferred from homology"/>
<sequence length="190" mass="20119">MQVILLERVAKLGQMGDVVKVRDGYARNFLLPQGKALRANDANIKSFEARKAQLEARNLETKKEAEAAAAKLEGQKFVVIRSASDAGALYGSVTPRDAAEAATAGGFSVDKRQVALKAPIKELGLHDVHVILHPEVQATITINVARSAEEAAIQAAGKSIQQLAAEADAAAEFEIAELFDEVGAAASDDE</sequence>